<dbReference type="EMBL" id="AF338343">
    <property type="protein sequence ID" value="AAK08102.1"/>
    <property type="molecule type" value="mRNA"/>
</dbReference>
<dbReference type="EMBL" id="KF051008">
    <property type="protein sequence ID" value="AHX83794.1"/>
    <property type="molecule type" value="mRNA"/>
</dbReference>
<dbReference type="EMBL" id="DP000011">
    <property type="protein sequence ID" value="ABA97757.1"/>
    <property type="molecule type" value="Genomic_DNA"/>
</dbReference>
<dbReference type="EMBL" id="AP008218">
    <property type="protein sequence ID" value="BAF29608.1"/>
    <property type="molecule type" value="Genomic_DNA"/>
</dbReference>
<dbReference type="EMBL" id="AP014968">
    <property type="protein sequence ID" value="BAT16753.1"/>
    <property type="molecule type" value="Genomic_DNA"/>
</dbReference>
<dbReference type="EMBL" id="CM000149">
    <property type="protein sequence ID" value="EEE53054.1"/>
    <property type="molecule type" value="Genomic_DNA"/>
</dbReference>
<dbReference type="EMBL" id="AK063847">
    <property type="protein sequence ID" value="BAG88890.1"/>
    <property type="molecule type" value="mRNA"/>
</dbReference>
<dbReference type="RefSeq" id="NP_001391657.1">
    <property type="nucleotide sequence ID" value="NM_001404728.1"/>
</dbReference>
<dbReference type="RefSeq" id="XP_015618267.1">
    <property type="nucleotide sequence ID" value="XM_015762781.1"/>
</dbReference>
<dbReference type="SMR" id="P49030"/>
<dbReference type="FunCoup" id="P49030">
    <property type="interactions" value="3354"/>
</dbReference>
<dbReference type="STRING" id="39947.P49030"/>
<dbReference type="PaxDb" id="39947-P49030"/>
<dbReference type="EnsemblPlants" id="Os12t0287200-01">
    <property type="protein sequence ID" value="Os12t0287200-01"/>
    <property type="gene ID" value="Os12g0287200"/>
</dbReference>
<dbReference type="GeneID" id="4351998"/>
<dbReference type="Gramene" id="Os12t0287200-01">
    <property type="protein sequence ID" value="Os12t0287200-01"/>
    <property type="gene ID" value="Os12g0287200"/>
</dbReference>
<dbReference type="KEGG" id="dosa:Os12g0287200"/>
<dbReference type="eggNOG" id="KOG3392">
    <property type="taxonomic scope" value="Eukaryota"/>
</dbReference>
<dbReference type="HOGENOM" id="CLU_109497_1_1_1"/>
<dbReference type="InParanoid" id="P49030"/>
<dbReference type="OMA" id="IRKEMWI"/>
<dbReference type="OrthoDB" id="6495301at2759"/>
<dbReference type="Proteomes" id="UP000000763">
    <property type="component" value="Chromosome 12"/>
</dbReference>
<dbReference type="Proteomes" id="UP000007752">
    <property type="component" value="Chromosome 12"/>
</dbReference>
<dbReference type="Proteomes" id="UP000059680">
    <property type="component" value="Chromosome 12"/>
</dbReference>
<dbReference type="GO" id="GO:0005737">
    <property type="term" value="C:cytoplasm"/>
    <property type="evidence" value="ECO:0007669"/>
    <property type="project" value="UniProtKB-SubCell"/>
</dbReference>
<dbReference type="GO" id="GO:0035145">
    <property type="term" value="C:exon-exon junction complex"/>
    <property type="evidence" value="ECO:0000318"/>
    <property type="project" value="GO_Central"/>
</dbReference>
<dbReference type="GO" id="GO:0005634">
    <property type="term" value="C:nucleus"/>
    <property type="evidence" value="ECO:0000314"/>
    <property type="project" value="UniProtKB"/>
</dbReference>
<dbReference type="GO" id="GO:0003723">
    <property type="term" value="F:RNA binding"/>
    <property type="evidence" value="ECO:0007669"/>
    <property type="project" value="UniProtKB-KW"/>
</dbReference>
<dbReference type="GO" id="GO:0006397">
    <property type="term" value="P:mRNA processing"/>
    <property type="evidence" value="ECO:0007669"/>
    <property type="project" value="UniProtKB-KW"/>
</dbReference>
<dbReference type="GO" id="GO:0051028">
    <property type="term" value="P:mRNA transport"/>
    <property type="evidence" value="ECO:0007669"/>
    <property type="project" value="UniProtKB-KW"/>
</dbReference>
<dbReference type="GO" id="GO:0000184">
    <property type="term" value="P:nuclear-transcribed mRNA catabolic process, nonsense-mediated decay"/>
    <property type="evidence" value="ECO:0007669"/>
    <property type="project" value="UniProtKB-KW"/>
</dbReference>
<dbReference type="GO" id="GO:0006417">
    <property type="term" value="P:regulation of translation"/>
    <property type="evidence" value="ECO:0007669"/>
    <property type="project" value="UniProtKB-KW"/>
</dbReference>
<dbReference type="GO" id="GO:0008380">
    <property type="term" value="P:RNA splicing"/>
    <property type="evidence" value="ECO:0000318"/>
    <property type="project" value="GO_Central"/>
</dbReference>
<dbReference type="CDD" id="cd11295">
    <property type="entry name" value="Mago_nashi"/>
    <property type="match status" value="1"/>
</dbReference>
<dbReference type="FunFam" id="3.30.1560.10:FF:000001">
    <property type="entry name" value="Protein mago nashi homolog"/>
    <property type="match status" value="1"/>
</dbReference>
<dbReference type="Gene3D" id="3.30.1560.10">
    <property type="entry name" value="Mago nashi"/>
    <property type="match status" value="1"/>
</dbReference>
<dbReference type="InterPro" id="IPR004023">
    <property type="entry name" value="Mago_nashi"/>
</dbReference>
<dbReference type="InterPro" id="IPR036605">
    <property type="entry name" value="Mago_nashi_sf"/>
</dbReference>
<dbReference type="PANTHER" id="PTHR12638:SF0">
    <property type="entry name" value="MAGO HOMOLOG, EXON JUNCTION COMPLEX SUBUNIT-RELATED"/>
    <property type="match status" value="1"/>
</dbReference>
<dbReference type="PANTHER" id="PTHR12638">
    <property type="entry name" value="PROTEIN MAGO NASHI HOMOLOG"/>
    <property type="match status" value="1"/>
</dbReference>
<dbReference type="Pfam" id="PF02792">
    <property type="entry name" value="Mago_nashi"/>
    <property type="match status" value="1"/>
</dbReference>
<dbReference type="SUPFAM" id="SSF89817">
    <property type="entry name" value="Mago nashi protein"/>
    <property type="match status" value="1"/>
</dbReference>
<gene>
    <name evidence="6" type="primary">MAGO2</name>
    <name evidence="10" type="ordered locus">Os12g0287200</name>
    <name evidence="9" type="ordered locus">LOC_Os12g18880</name>
    <name evidence="11" type="ORF">OsJ_35789</name>
</gene>
<sequence length="160" mass="18430">MATGGAAGEDVPGGGEFYLRYYVGHKGKFGHEFLEFEFRPDGKLRYANNSNYKNDTMIRKEVFVSPSVLREARRIIQESEIMKEDDNNWPEPDRVGRQELEIVMGNEHISFTTSKIGSLVDVQTSKDPEGLRIFYYLVQDLKCFVFSLINLHFKIKPIQS</sequence>
<keyword id="KW-0963">Cytoplasm</keyword>
<keyword id="KW-0507">mRNA processing</keyword>
<keyword id="KW-0508">mRNA splicing</keyword>
<keyword id="KW-0509">mRNA transport</keyword>
<keyword id="KW-0866">Nonsense-mediated mRNA decay</keyword>
<keyword id="KW-0539">Nucleus</keyword>
<keyword id="KW-1185">Reference proteome</keyword>
<keyword id="KW-0694">RNA-binding</keyword>
<keyword id="KW-0810">Translation regulation</keyword>
<keyword id="KW-0813">Transport</keyword>
<evidence type="ECO:0000250" key="1">
    <source>
        <dbReference type="UniProtKB" id="P61326"/>
    </source>
</evidence>
<evidence type="ECO:0000269" key="2">
    <source>
    </source>
</evidence>
<evidence type="ECO:0000269" key="3">
    <source>
    </source>
</evidence>
<evidence type="ECO:0000269" key="4">
    <source>
    </source>
</evidence>
<evidence type="ECO:0000269" key="5">
    <source>
    </source>
</evidence>
<evidence type="ECO:0000303" key="6">
    <source>
    </source>
</evidence>
<evidence type="ECO:0000305" key="7"/>
<evidence type="ECO:0000305" key="8">
    <source>
    </source>
</evidence>
<evidence type="ECO:0000312" key="9">
    <source>
        <dbReference type="EMBL" id="ABA97757.1"/>
    </source>
</evidence>
<evidence type="ECO:0000312" key="10">
    <source>
        <dbReference type="EMBL" id="BAT16753.1"/>
    </source>
</evidence>
<evidence type="ECO:0000312" key="11">
    <source>
        <dbReference type="EMBL" id="EEE53054.1"/>
    </source>
</evidence>
<organism>
    <name type="scientific">Oryza sativa subsp. japonica</name>
    <name type="common">Rice</name>
    <dbReference type="NCBI Taxonomy" id="39947"/>
    <lineage>
        <taxon>Eukaryota</taxon>
        <taxon>Viridiplantae</taxon>
        <taxon>Streptophyta</taxon>
        <taxon>Embryophyta</taxon>
        <taxon>Tracheophyta</taxon>
        <taxon>Spermatophyta</taxon>
        <taxon>Magnoliopsida</taxon>
        <taxon>Liliopsida</taxon>
        <taxon>Poales</taxon>
        <taxon>Poaceae</taxon>
        <taxon>BOP clade</taxon>
        <taxon>Oryzoideae</taxon>
        <taxon>Oryzeae</taxon>
        <taxon>Oryzinae</taxon>
        <taxon>Oryza</taxon>
        <taxon>Oryza sativa</taxon>
    </lineage>
</organism>
<feature type="chain" id="PRO_0000174154" description="Protein mago nashi homolog 2">
    <location>
        <begin position="1"/>
        <end position="160"/>
    </location>
</feature>
<comment type="function">
    <text evidence="1 4 5">Core component of the splicing-dependent multiprotein exon junction complex (EJC) deposited at splice junctions on mRNAs. The EJC is a dynamic structure consisting of core proteins and several peripheral nuclear and cytoplasmic associated factors that join the complex only transiently either during EJC assembly or during subsequent mRNA metabolism. The EJC marks the position of the exon-exon junction in the mature mRNA for the gene expression machinery and the core components remain bound to spliced mRNAs throughout all stages of mRNA metabolism thereby influencing downstream processes including nuclear mRNA export, subcellular mRNA localization, translation efficiency and nonsense-mediated mRNA decay (NMD). The MAGO-Y14 heterodimer inhibits the ATPase activity of EIF4A3, thereby trapping the ATP-bound EJC core onto spliced mRNA in a stable conformation. The MAGO-Y14 heterodimer interacts with the EJC key regulator PYM leading to EJC disassembly in the cytoplasm (By similarity). EJC core heterodimers play essential roles in plant growth and development, and pollen and seed development (PubMed:24820023, PubMed:25230811). The MAGO-Y14 heterodimer selectively binds to the UDT1 (UNDEVELOPED TAPETUM 1) pre-mRNA transcript and regulates the splicing of UDT1, a key regulator in stamen development (PubMed:24820023).</text>
</comment>
<comment type="subunit">
    <text evidence="3 4 5 8">Heterodimer with Y14A (PubMed:24416299, PubMed:24820023, PubMed:25230811). Heterodimer with Y14B (PubMed:24416299, PubMed:24820023). Part of the mRNA splicing-dependent exon junction complex (EJC); the core complex contains MLN51/CASC3, EIF4A3, MAGO and Y14 (Probable).</text>
</comment>
<comment type="subcellular location">
    <subcellularLocation>
        <location evidence="4">Nucleus</location>
    </subcellularLocation>
    <subcellularLocation>
        <location evidence="1">Cytoplasm</location>
    </subcellularLocation>
    <text evidence="1">Nucleocytoplasmic shuttling protein. Travels to the cytoplasm as part of the exon junction complex (EJC) bound to mRNA.</text>
</comment>
<comment type="tissue specificity">
    <text evidence="2">Expressed in root, leaf and developing seed tissue.</text>
</comment>
<comment type="induction">
    <text evidence="4">Induced by gibberellin, abscisic acid (ABA), auxin and brassinosteroid.</text>
</comment>
<comment type="similarity">
    <text evidence="7">Belongs to the mago nashi family.</text>
</comment>
<name>MGN2_ORYSJ</name>
<accession>P49030</accession>
<accession>Q0INV7</accession>
<accession>Q2QTQ3</accession>
<accession>Q9AXD9</accession>
<protein>
    <recommendedName>
        <fullName evidence="7">Protein mago nashi homolog 2</fullName>
        <shortName evidence="6">OsMAGO2</shortName>
    </recommendedName>
    <alternativeName>
        <fullName evidence="7">Mago nashi-like protein 2</fullName>
    </alternativeName>
</protein>
<proteinExistence type="evidence at protein level"/>
<reference key="1">
    <citation type="journal article" date="2001" name="Genome">
        <title>Molecular characterization and expression analysis of a highly conserved rice mago nashil homolog.</title>
        <authorList>
            <person name="Swidzinski J.A."/>
            <person name="Zaplachinski S.T."/>
            <person name="Chuong S.D."/>
            <person name="Wong J.F."/>
            <person name="Muench D.G."/>
        </authorList>
    </citation>
    <scope>NUCLEOTIDE SEQUENCE [MRNA]</scope>
    <scope>TISSUE SPECIFICITY</scope>
    <source>
        <tissue>Shoot</tissue>
    </source>
</reference>
<reference key="2">
    <citation type="journal article" date="2014" name="PLoS ONE">
        <title>Slow co-evolution of the MAGO and Y14 protein families is required for the maintenance of their obligate heterodimerization mode.</title>
        <authorList>
            <person name="Gong P."/>
            <person name="Zhao M."/>
            <person name="He C."/>
        </authorList>
    </citation>
    <scope>NUCLEOTIDE SEQUENCE [MRNA]</scope>
    <scope>INTERACTION WITH Y14A AND Y14B</scope>
</reference>
<reference key="3">
    <citation type="journal article" date="2005" name="BMC Biol.">
        <title>The sequence of rice chromosomes 11 and 12, rich in disease resistance genes and recent gene duplications.</title>
        <authorList>
            <consortium name="The rice chromosomes 11 and 12 sequencing consortia"/>
        </authorList>
    </citation>
    <scope>NUCLEOTIDE SEQUENCE [LARGE SCALE GENOMIC DNA]</scope>
    <source>
        <strain>cv. Nipponbare</strain>
    </source>
</reference>
<reference key="4">
    <citation type="journal article" date="2005" name="Nature">
        <title>The map-based sequence of the rice genome.</title>
        <authorList>
            <consortium name="International rice genome sequencing project (IRGSP)"/>
        </authorList>
    </citation>
    <scope>NUCLEOTIDE SEQUENCE [LARGE SCALE GENOMIC DNA]</scope>
    <source>
        <strain>cv. Nipponbare</strain>
    </source>
</reference>
<reference key="5">
    <citation type="journal article" date="2008" name="Nucleic Acids Res.">
        <title>The rice annotation project database (RAP-DB): 2008 update.</title>
        <authorList>
            <consortium name="The rice annotation project (RAP)"/>
        </authorList>
    </citation>
    <scope>GENOME REANNOTATION</scope>
    <source>
        <strain>cv. Nipponbare</strain>
    </source>
</reference>
<reference key="6">
    <citation type="journal article" date="2013" name="Rice">
        <title>Improvement of the Oryza sativa Nipponbare reference genome using next generation sequence and optical map data.</title>
        <authorList>
            <person name="Kawahara Y."/>
            <person name="de la Bastide M."/>
            <person name="Hamilton J.P."/>
            <person name="Kanamori H."/>
            <person name="McCombie W.R."/>
            <person name="Ouyang S."/>
            <person name="Schwartz D.C."/>
            <person name="Tanaka T."/>
            <person name="Wu J."/>
            <person name="Zhou S."/>
            <person name="Childs K.L."/>
            <person name="Davidson R.M."/>
            <person name="Lin H."/>
            <person name="Quesada-Ocampo L."/>
            <person name="Vaillancourt B."/>
            <person name="Sakai H."/>
            <person name="Lee S.S."/>
            <person name="Kim J."/>
            <person name="Numa H."/>
            <person name="Itoh T."/>
            <person name="Buell C.R."/>
            <person name="Matsumoto T."/>
        </authorList>
    </citation>
    <scope>GENOME REANNOTATION</scope>
    <source>
        <strain>cv. Nipponbare</strain>
    </source>
</reference>
<reference key="7">
    <citation type="journal article" date="2005" name="PLoS Biol.">
        <title>The genomes of Oryza sativa: a history of duplications.</title>
        <authorList>
            <person name="Yu J."/>
            <person name="Wang J."/>
            <person name="Lin W."/>
            <person name="Li S."/>
            <person name="Li H."/>
            <person name="Zhou J."/>
            <person name="Ni P."/>
            <person name="Dong W."/>
            <person name="Hu S."/>
            <person name="Zeng C."/>
            <person name="Zhang J."/>
            <person name="Zhang Y."/>
            <person name="Li R."/>
            <person name="Xu Z."/>
            <person name="Li S."/>
            <person name="Li X."/>
            <person name="Zheng H."/>
            <person name="Cong L."/>
            <person name="Lin L."/>
            <person name="Yin J."/>
            <person name="Geng J."/>
            <person name="Li G."/>
            <person name="Shi J."/>
            <person name="Liu J."/>
            <person name="Lv H."/>
            <person name="Li J."/>
            <person name="Wang J."/>
            <person name="Deng Y."/>
            <person name="Ran L."/>
            <person name="Shi X."/>
            <person name="Wang X."/>
            <person name="Wu Q."/>
            <person name="Li C."/>
            <person name="Ren X."/>
            <person name="Wang J."/>
            <person name="Wang X."/>
            <person name="Li D."/>
            <person name="Liu D."/>
            <person name="Zhang X."/>
            <person name="Ji Z."/>
            <person name="Zhao W."/>
            <person name="Sun Y."/>
            <person name="Zhang Z."/>
            <person name="Bao J."/>
            <person name="Han Y."/>
            <person name="Dong L."/>
            <person name="Ji J."/>
            <person name="Chen P."/>
            <person name="Wu S."/>
            <person name="Liu J."/>
            <person name="Xiao Y."/>
            <person name="Bu D."/>
            <person name="Tan J."/>
            <person name="Yang L."/>
            <person name="Ye C."/>
            <person name="Zhang J."/>
            <person name="Xu J."/>
            <person name="Zhou Y."/>
            <person name="Yu Y."/>
            <person name="Zhang B."/>
            <person name="Zhuang S."/>
            <person name="Wei H."/>
            <person name="Liu B."/>
            <person name="Lei M."/>
            <person name="Yu H."/>
            <person name="Li Y."/>
            <person name="Xu H."/>
            <person name="Wei S."/>
            <person name="He X."/>
            <person name="Fang L."/>
            <person name="Zhang Z."/>
            <person name="Zhang Y."/>
            <person name="Huang X."/>
            <person name="Su Z."/>
            <person name="Tong W."/>
            <person name="Li J."/>
            <person name="Tong Z."/>
            <person name="Li S."/>
            <person name="Ye J."/>
            <person name="Wang L."/>
            <person name="Fang L."/>
            <person name="Lei T."/>
            <person name="Chen C.-S."/>
            <person name="Chen H.-C."/>
            <person name="Xu Z."/>
            <person name="Li H."/>
            <person name="Huang H."/>
            <person name="Zhang F."/>
            <person name="Xu H."/>
            <person name="Li N."/>
            <person name="Zhao C."/>
            <person name="Li S."/>
            <person name="Dong L."/>
            <person name="Huang Y."/>
            <person name="Li L."/>
            <person name="Xi Y."/>
            <person name="Qi Q."/>
            <person name="Li W."/>
            <person name="Zhang B."/>
            <person name="Hu W."/>
            <person name="Zhang Y."/>
            <person name="Tian X."/>
            <person name="Jiao Y."/>
            <person name="Liang X."/>
            <person name="Jin J."/>
            <person name="Gao L."/>
            <person name="Zheng W."/>
            <person name="Hao B."/>
            <person name="Liu S.-M."/>
            <person name="Wang W."/>
            <person name="Yuan L."/>
            <person name="Cao M."/>
            <person name="McDermott J."/>
            <person name="Samudrala R."/>
            <person name="Wang J."/>
            <person name="Wong G.K.-S."/>
            <person name="Yang H."/>
        </authorList>
    </citation>
    <scope>NUCLEOTIDE SEQUENCE [LARGE SCALE GENOMIC DNA]</scope>
    <source>
        <strain>cv. Nipponbare</strain>
    </source>
</reference>
<reference key="8">
    <citation type="journal article" date="2003" name="Science">
        <title>Collection, mapping, and annotation of over 28,000 cDNA clones from japonica rice.</title>
        <authorList>
            <consortium name="The rice full-length cDNA consortium"/>
        </authorList>
    </citation>
    <scope>NUCLEOTIDE SEQUENCE [LARGE SCALE MRNA]</scope>
    <source>
        <strain>cv. Nipponbare</strain>
    </source>
</reference>
<reference key="9">
    <citation type="journal article" date="2014" name="Plant J.">
        <title>Targeting MAGO proteins with a peptide aptamer reinforces their essential roles in multiple rice developmental pathways.</title>
        <authorList>
            <person name="Gong P."/>
            <person name="Quan H."/>
            <person name="He C."/>
        </authorList>
    </citation>
    <scope>FUNCTION</scope>
    <scope>INTERACTION WITH Y14B</scope>
</reference>
<reference key="10">
    <citation type="journal article" date="2014" name="Plant Physiol.">
        <title>Uncovering divergence of rice exon junction complex core heterodimer gene duplication reveals their essential role in growth, development, and reproduction.</title>
        <authorList>
            <person name="Gong P."/>
            <person name="He C."/>
        </authorList>
    </citation>
    <scope>FUNCTION</scope>
    <scope>INTERACTION WITH Y14A AND Y14B</scope>
    <scope>SUBCELLULAR LOCATION</scope>
    <scope>INDUCTION</scope>
</reference>